<evidence type="ECO:0000250" key="1"/>
<evidence type="ECO:0000250" key="2">
    <source>
        <dbReference type="UniProtKB" id="B3FIS6"/>
    </source>
</evidence>
<evidence type="ECO:0000255" key="3"/>
<evidence type="ECO:0000305" key="4"/>
<accession>D2Y2M0</accession>
<sequence length="87" mass="10156">MVNMKASMFLTFAGLVLLFVVCYASESEEKEFPKEMLSSIFAVDNDFKQEERDCAGYMRECEEKLCCSGYVCSSRWKWCVLPAPWRR</sequence>
<proteinExistence type="inferred from homology"/>
<organism>
    <name type="scientific">Cyriopagopus hainanus</name>
    <name type="common">Chinese bird spider</name>
    <name type="synonym">Haplopelma hainanum</name>
    <dbReference type="NCBI Taxonomy" id="209901"/>
    <lineage>
        <taxon>Eukaryota</taxon>
        <taxon>Metazoa</taxon>
        <taxon>Ecdysozoa</taxon>
        <taxon>Arthropoda</taxon>
        <taxon>Chelicerata</taxon>
        <taxon>Arachnida</taxon>
        <taxon>Araneae</taxon>
        <taxon>Mygalomorphae</taxon>
        <taxon>Theraphosidae</taxon>
        <taxon>Haplopelma</taxon>
    </lineage>
</organism>
<reference key="1">
    <citation type="journal article" date="2010" name="J. Proteome Res.">
        <title>Molecular diversification of peptide toxins from the tarantula Haplopelma hainanum (Ornithoctonus hainana) venom based on transcriptomic, peptidomic, and genomic analyses.</title>
        <authorList>
            <person name="Tang X."/>
            <person name="Zhang Y."/>
            <person name="Hu W."/>
            <person name="Xu D."/>
            <person name="Tao H."/>
            <person name="Yang X."/>
            <person name="Li Y."/>
            <person name="Jiang L."/>
            <person name="Liang S."/>
        </authorList>
    </citation>
    <scope>NUCLEOTIDE SEQUENCE [LARGE SCALE GENOMIC DNA]</scope>
    <source>
        <tissue>Venom gland</tissue>
    </source>
</reference>
<comment type="function">
    <text evidence="1">Ion channel inhibitor.</text>
</comment>
<comment type="subcellular location">
    <subcellularLocation>
        <location evidence="1">Secreted</location>
    </subcellularLocation>
</comment>
<comment type="tissue specificity">
    <text>Expressed by the venom gland.</text>
</comment>
<comment type="domain">
    <text evidence="1">The presence of a 'disulfide through disulfide knot' structurally defines this protein as a knottin.</text>
</comment>
<comment type="similarity">
    <text evidence="4">Belongs to the neurotoxin 10 (Hwtx-1) family. 51 (Hntx-8) subfamily. Hntx-8 sub-subfamily.</text>
</comment>
<protein>
    <recommendedName>
        <fullName>U3-theraphotoxin-Hhn1q</fullName>
        <shortName>U3-TRTX-Hhn1q</shortName>
    </recommendedName>
    <alternativeName>
        <fullName>Hainantoxin-VIII-9</fullName>
        <shortName>HNTX-VIII-9</shortName>
    </alternativeName>
</protein>
<name>H8I01_CYRHA</name>
<keyword id="KW-1015">Disulfide bond</keyword>
<keyword id="KW-0872">Ion channel impairing toxin</keyword>
<keyword id="KW-0960">Knottin</keyword>
<keyword id="KW-0964">Secreted</keyword>
<keyword id="KW-0732">Signal</keyword>
<keyword id="KW-0800">Toxin</keyword>
<dbReference type="EMBL" id="GU293097">
    <property type="protein sequence ID" value="ADB56913.1"/>
    <property type="molecule type" value="Genomic_DNA"/>
</dbReference>
<dbReference type="SMR" id="D2Y2M0"/>
<dbReference type="ArachnoServer" id="AS001977">
    <property type="toxin name" value="U3-theraphotoxin-Hhn1q"/>
</dbReference>
<dbReference type="GO" id="GO:0005576">
    <property type="term" value="C:extracellular region"/>
    <property type="evidence" value="ECO:0007669"/>
    <property type="project" value="UniProtKB-SubCell"/>
</dbReference>
<dbReference type="GO" id="GO:0008200">
    <property type="term" value="F:ion channel inhibitor activity"/>
    <property type="evidence" value="ECO:0007669"/>
    <property type="project" value="InterPro"/>
</dbReference>
<dbReference type="GO" id="GO:0090729">
    <property type="term" value="F:toxin activity"/>
    <property type="evidence" value="ECO:0007669"/>
    <property type="project" value="UniProtKB-KW"/>
</dbReference>
<dbReference type="InterPro" id="IPR011696">
    <property type="entry name" value="Huwentoxin-1"/>
</dbReference>
<dbReference type="InterPro" id="IPR013140">
    <property type="entry name" value="Huwentoxin_CS1"/>
</dbReference>
<dbReference type="Pfam" id="PF07740">
    <property type="entry name" value="Toxin_12"/>
    <property type="match status" value="1"/>
</dbReference>
<dbReference type="SUPFAM" id="SSF57059">
    <property type="entry name" value="omega toxin-like"/>
    <property type="match status" value="1"/>
</dbReference>
<dbReference type="PROSITE" id="PS60021">
    <property type="entry name" value="HWTX_1"/>
    <property type="match status" value="1"/>
</dbReference>
<feature type="signal peptide" evidence="3">
    <location>
        <begin position="1"/>
        <end position="24"/>
    </location>
</feature>
<feature type="propeptide" id="PRO_0000400631" evidence="1">
    <location>
        <begin position="25"/>
        <end position="52"/>
    </location>
</feature>
<feature type="peptide" id="PRO_0000400632" description="U3-theraphotoxin-Hhn1q">
    <location>
        <begin position="53"/>
        <end position="87"/>
    </location>
</feature>
<feature type="disulfide bond" evidence="2">
    <location>
        <begin position="54"/>
        <end position="67"/>
    </location>
</feature>
<feature type="disulfide bond" evidence="2">
    <location>
        <begin position="61"/>
        <end position="72"/>
    </location>
</feature>
<feature type="disulfide bond" evidence="2">
    <location>
        <begin position="66"/>
        <end position="79"/>
    </location>
</feature>